<accession>Q62101</accession>
<accession>E9QNA3</accession>
<protein>
    <recommendedName>
        <fullName>Serine/threonine-protein kinase D1</fullName>
        <ecNumber>2.7.11.13</ecNumber>
    </recommendedName>
    <alternativeName>
        <fullName>Protein kinase C mu type</fullName>
    </alternativeName>
    <alternativeName>
        <fullName>Protein kinase D</fullName>
    </alternativeName>
    <alternativeName>
        <fullName>nPKC-D1</fullName>
    </alternativeName>
    <alternativeName>
        <fullName>nPKC-mu</fullName>
    </alternativeName>
</protein>
<proteinExistence type="evidence at protein level"/>
<feature type="chain" id="PRO_0000055715" description="Serine/threonine-protein kinase D1">
    <location>
        <begin position="1"/>
        <end position="918"/>
    </location>
</feature>
<feature type="domain" description="PH" evidence="5">
    <location>
        <begin position="428"/>
        <end position="547"/>
    </location>
</feature>
<feature type="domain" description="Protein kinase" evidence="6">
    <location>
        <begin position="589"/>
        <end position="845"/>
    </location>
</feature>
<feature type="zinc finger region" description="Phorbol-ester/DAG-type 1" evidence="7">
    <location>
        <begin position="144"/>
        <end position="194"/>
    </location>
</feature>
<feature type="zinc finger region" description="Phorbol-ester/DAG-type 2" evidence="7">
    <location>
        <begin position="276"/>
        <end position="326"/>
    </location>
</feature>
<feature type="region of interest" description="Disordered" evidence="9">
    <location>
        <begin position="338"/>
        <end position="362"/>
    </location>
</feature>
<feature type="region of interest" description="Disordered" evidence="9">
    <location>
        <begin position="379"/>
        <end position="410"/>
    </location>
</feature>
<feature type="compositionally biased region" description="Acidic residues" evidence="9">
    <location>
        <begin position="345"/>
        <end position="355"/>
    </location>
</feature>
<feature type="compositionally biased region" description="Polar residues" evidence="9">
    <location>
        <begin position="400"/>
        <end position="410"/>
    </location>
</feature>
<feature type="active site" description="Proton acceptor" evidence="6 8">
    <location>
        <position position="712"/>
    </location>
</feature>
<feature type="binding site" evidence="6">
    <location>
        <begin position="595"/>
        <end position="603"/>
    </location>
    <ligand>
        <name>ATP</name>
        <dbReference type="ChEBI" id="CHEBI:30616"/>
    </ligand>
</feature>
<feature type="binding site" evidence="6">
    <location>
        <position position="618"/>
    </location>
    <ligand>
        <name>ATP</name>
        <dbReference type="ChEBI" id="CHEBI:30616"/>
    </ligand>
</feature>
<feature type="modified residue" description="Phosphotyrosine" evidence="1">
    <location>
        <position position="93"/>
    </location>
</feature>
<feature type="modified residue" description="Phosphoserine" evidence="23">
    <location>
        <position position="203"/>
    </location>
</feature>
<feature type="modified residue" description="Phosphoserine" evidence="23">
    <location>
        <position position="206"/>
    </location>
</feature>
<feature type="modified residue" description="Phosphoserine" evidence="2">
    <location>
        <position position="217"/>
    </location>
</feature>
<feature type="modified residue" description="Phosphoserine" evidence="4">
    <location>
        <position position="221"/>
    </location>
</feature>
<feature type="modified residue" description="Phosphoserine" evidence="1">
    <location>
        <position position="351"/>
    </location>
</feature>
<feature type="modified residue" description="Phosphoserine; by MAPK13" evidence="1">
    <location>
        <position position="403"/>
    </location>
</feature>
<feature type="modified residue" description="Phosphoserine; by MAPK13" evidence="1">
    <location>
        <position position="407"/>
    </location>
</feature>
<feature type="modified residue" description="Phosphotyrosine" evidence="1">
    <location>
        <position position="438"/>
    </location>
</feature>
<feature type="modified residue" description="Phosphoserine" evidence="1">
    <location>
        <position position="454"/>
    </location>
</feature>
<feature type="modified residue" description="Phosphotyrosine; by ABL" evidence="4">
    <location>
        <position position="469"/>
    </location>
</feature>
<feature type="modified residue" description="Phosphotyrosine" evidence="1">
    <location>
        <position position="508"/>
    </location>
</feature>
<feature type="modified residue" description="Phosphoserine" evidence="3">
    <location>
        <position position="554"/>
    </location>
</feature>
<feature type="modified residue" description="Phosphoserine; by PKC/PRKCD" evidence="12 14">
    <location>
        <position position="744"/>
    </location>
</feature>
<feature type="modified residue" description="Phosphoserine; by autocatalysis and PKC/PRKCD" evidence="12 14">
    <location>
        <position position="748"/>
    </location>
</feature>
<feature type="modified residue" description="Phosphotyrosine" evidence="4">
    <location>
        <position position="755"/>
    </location>
</feature>
<feature type="modified residue" description="Phosphoserine; by autocatalysis" evidence="10 20">
    <location>
        <position position="916"/>
    </location>
</feature>
<feature type="mutagenesis site" description="Loss of basal kinase activity and phorbol ester-stimulated kinase activity; when associated with A-748." evidence="14">
    <original>S</original>
    <variation>A</variation>
    <location>
        <position position="744"/>
    </location>
</feature>
<feature type="mutagenesis site" description="High basal kinase activity, loss of phorbol ester-stimulated kinase activity; when associated with D-748." evidence="14">
    <original>S</original>
    <variation>D</variation>
    <location>
        <position position="744"/>
    </location>
</feature>
<feature type="mutagenesis site" description="Loss of basal kinase activity and phorbol ester-stimulated kinase activity; when associated with A-744." evidence="14">
    <original>S</original>
    <variation>A</variation>
    <location>
        <position position="748"/>
    </location>
</feature>
<feature type="mutagenesis site" description="High basal kinase activity, loss of phorbol ester-stimulated kinase activity; when associated with D-744." evidence="14">
    <original>S</original>
    <variation>D</variation>
    <location>
        <position position="748"/>
    </location>
</feature>
<feature type="sequence conflict" description="In Ref. 1; CAA84283." evidence="22" ref="1">
    <original>R</original>
    <variation>W</variation>
    <location>
        <position position="683"/>
    </location>
</feature>
<gene>
    <name type="primary">Prkd1</name>
    <name type="synonym">Pkcm</name>
    <name type="synonym">Pkd</name>
    <name type="synonym">Prkcm</name>
</gene>
<keyword id="KW-0037">Angiogenesis</keyword>
<keyword id="KW-0053">Apoptosis</keyword>
<keyword id="KW-0067">ATP-binding</keyword>
<keyword id="KW-1003">Cell membrane</keyword>
<keyword id="KW-0963">Cytoplasm</keyword>
<keyword id="KW-0221">Differentiation</keyword>
<keyword id="KW-0333">Golgi apparatus</keyword>
<keyword id="KW-0391">Immunity</keyword>
<keyword id="KW-0395">Inflammatory response</keyword>
<keyword id="KW-0399">Innate immunity</keyword>
<keyword id="KW-0418">Kinase</keyword>
<keyword id="KW-0460">Magnesium</keyword>
<keyword id="KW-0472">Membrane</keyword>
<keyword id="KW-0479">Metal-binding</keyword>
<keyword id="KW-0524">Neurogenesis</keyword>
<keyword id="KW-0547">Nucleotide-binding</keyword>
<keyword id="KW-0597">Phosphoprotein</keyword>
<keyword id="KW-1185">Reference proteome</keyword>
<keyword id="KW-0677">Repeat</keyword>
<keyword id="KW-0723">Serine/threonine-protein kinase</keyword>
<keyword id="KW-0808">Transferase</keyword>
<keyword id="KW-0862">Zinc</keyword>
<keyword id="KW-0863">Zinc-finger</keyword>
<comment type="function">
    <text evidence="1 11 13 14 15 16 17 18 19 20">Serine/threonine-protein kinase that converts transient diacylglycerol (DAG) signals into prolonged physiological effects downstream of PKC, and is involved in the regulation of MAPK8/JNK1 and Ras signaling, Golgi membrane integrity and trafficking, cell survival through NF-kappa-B activation, cell migration, cell differentiation by mediating HDAC7 nuclear export, cell proliferation via MAPK1/3 (ERK1/2) signaling, and plays a role in cardiac hypertrophy, VEGFA-induced angiogenesis, genotoxic-induced apoptosis and flagellin-stimulated inflammatory response (PubMed:12407104, PubMed:14963034, PubMed:15192707, PubMed:20463010, PubMed:24161911, PubMed:28716882). Phosphorylates the epidermal growth factor receptor (EGFR) on dual threonine residues, which leads to the suppression of epidermal growth factor (EGF)-induced MAPK8/JNK1 activation and subsequent JUN phosphorylation. Phosphorylates RIN1, inducing RIN1 binding to 14-3-3 proteins YWHAB, YWHAE and YWHAZ and increased competition with RAF1 for binding to GTP-bound form of Ras proteins (NRAS, HRAS and KRAS) (PubMed:11784866). Acts downstream of the heterotrimeric G-protein beta/gamma-subunit complex to maintain the structural integrity of the Golgi membranes, and is required for protein transport along the secretory pathway. In the trans-Golgi network (TGN), regulates the fission of transport vesicles that are on their way to the plasma membrane (PubMed:11239398). May act by activating the lipid kinase phosphatidylinositol 4-kinase beta (PI4KB) at the TGN for the local synthesis of phosphorylated inositol lipids, which induces a sequential production of DAG, phosphatidic acid (PA) and lyso-PA (LPA) that are necessary for membrane fission and generation of specific transport carriers to the cell surface. Under oxidative stress, is phosphorylated at Tyr-469 via SRC-ABL1 and contributes to cell survival by activating IKK complex and subsequent nuclear translocation and activation of NFKB1. Involved in cell migration by regulating integrin alpha-5/beta-3 recycling and promoting its recruitment in newly forming focal adhesion (PubMed:15192707). In osteoblast differentiation, mediates the bone morphogenetic protein 2 (BMP2)-induced nuclear export of HDAC7, which results in the inhibition of HDAC7 transcriptional repression of RUNX2 (PubMed:19029091). In neurons, plays an important role in neuronal polarity by regulating the biogenesis of TGN-derived dendritic vesicles, and is involved in the maintenance of dendritic arborization and Golgi structure in hippocampal cells. May potentiate mitogenesis induced by the neuropeptide bombesin or vasopressin by mediating an increase in the duration of MAPK1/3 (ERK1/2) signaling, which leads to accumulation of immediate-early gene products including FOS that stimulate cell cycle progression. Plays an important role in the proliferative response induced by low calcium in keratinocytes, through sustained activation of MAPK1/3 (ERK1/2) pathway (PubMed:14963034, PubMed:20463010). Downstream of novel PKC signaling, plays a role in cardiac hypertrophy by phosphorylating HDAC5, which in turn triggers XPO1/CRM1-dependent nuclear export of HDAC5, MEF2A transcriptional activation and induction of downstream target genes that promote myocyte hypertrophy and pathological cardiac remodeling (PubMed:24161911). Mediates cardiac troponin I (TNNI3) phosphorylation at the PKA sites, which results in reduced myofilament calcium sensitivity, and accelerated crossbridge cycling kinetics. The PRKD1-HDAC5 pathway is also involved in angiogenesis by mediating VEGFA-induced specific subset of gene expression, cell migration, and tube formation. In response to VEGFA, is necessary and required for HDAC7 phosphorylation which induces HDAC7 nuclear export and endothelial cell proliferation and migration. During apoptosis induced by cytarabine and other genotoxic agents, PRKD1 is cleaved by caspase-3 at Asp-378, resulting in activation of its kinase function and increased sensitivity of cells to the cytotoxic effects of genotoxic agents. In epithelial cells, is required for transducing flagellin-stimulated inflammatory responses by binding and phosphorylating TLR5, which contributes to MAPK14/p38 activation and production of inflammatory cytokines. Acts as an activator of NLRP3 inflammasome assembly by mediating phosphorylation of NLRP3 (PubMed:28716882). May play a role in inflammatory response by mediating activation of NF-kappa-B. May be involved in pain transmission by directly modulating TRPV1 receptor. Plays a role in activated KRAS-mediated stabilization of ZNF304 in colorectal cancer (CRC) cells (By similarity). Regulates nuclear translocation of transcription factor TFEB in macrophages upon live S.enterica infection (PubMed:27184844).</text>
</comment>
<comment type="catalytic activity">
    <reaction evidence="21">
        <text>L-seryl-[protein] + ATP = O-phospho-L-seryl-[protein] + ADP + H(+)</text>
        <dbReference type="Rhea" id="RHEA:17989"/>
        <dbReference type="Rhea" id="RHEA-COMP:9863"/>
        <dbReference type="Rhea" id="RHEA-COMP:11604"/>
        <dbReference type="ChEBI" id="CHEBI:15378"/>
        <dbReference type="ChEBI" id="CHEBI:29999"/>
        <dbReference type="ChEBI" id="CHEBI:30616"/>
        <dbReference type="ChEBI" id="CHEBI:83421"/>
        <dbReference type="ChEBI" id="CHEBI:456216"/>
        <dbReference type="EC" id="2.7.11.13"/>
    </reaction>
    <physiologicalReaction direction="left-to-right" evidence="21">
        <dbReference type="Rhea" id="RHEA:17990"/>
    </physiologicalReaction>
</comment>
<comment type="catalytic activity">
    <reaction>
        <text>L-threonyl-[protein] + ATP = O-phospho-L-threonyl-[protein] + ADP + H(+)</text>
        <dbReference type="Rhea" id="RHEA:46608"/>
        <dbReference type="Rhea" id="RHEA-COMP:11060"/>
        <dbReference type="Rhea" id="RHEA-COMP:11605"/>
        <dbReference type="ChEBI" id="CHEBI:15378"/>
        <dbReference type="ChEBI" id="CHEBI:30013"/>
        <dbReference type="ChEBI" id="CHEBI:30616"/>
        <dbReference type="ChEBI" id="CHEBI:61977"/>
        <dbReference type="ChEBI" id="CHEBI:456216"/>
        <dbReference type="EC" id="2.7.11.13"/>
    </reaction>
</comment>
<comment type="cofactor">
    <cofactor>
        <name>Mg(2+)</name>
        <dbReference type="ChEBI" id="CHEBI:18420"/>
    </cofactor>
</comment>
<comment type="activity regulation">
    <text evidence="1">Activated by DAG and phorbol esters. Phorbol-ester/DAG-type domain 1 binds DAG with high affinity and appears to play the dominant role in mediating translocation to the cell membrane and trans-Golgi network. Phorbol-ester/DAG-type domain 2 binds phorbol ester with higher affinity. Autophosphorylation of Ser-748 and phosphorylation of Ser-744 by PKC relieves auto-inhibition by the PH domain. Phosphorylation on Tyr-469 by the SRC-ABL1 pathway in response to oxidative stress, is also required for activation. Activated by DAPK1 under oxidative stress (By similarity).</text>
</comment>
<comment type="subunit">
    <text evidence="1 19">Interacts (via N-terminus) with ADAP1/CENTA1. Interacts with MAPK13. Interacts with DAPK1 in an oxidative stress-regulated manner. Interacts with USP28; the interaction induces phosphorylation of USP28 and activated KRAS-mediated stabilization of ZNF304 (By similarity). Interacts with AKAP13 (via C-terminal domain) (PubMed:24161911).</text>
</comment>
<comment type="interaction">
    <interactant intactId="EBI-6903636">
        <id>Q62101</id>
    </interactant>
    <interactant intactId="EBI-702847">
        <id>P05106</id>
        <label>ITGB3</label>
    </interactant>
    <organismsDiffer>true</organismsDiffer>
    <experiments>2</experiments>
</comment>
<comment type="subcellular location">
    <subcellularLocation>
        <location evidence="1">Cytoplasm</location>
    </subcellularLocation>
    <subcellularLocation>
        <location evidence="1">Cell membrane</location>
    </subcellularLocation>
    <subcellularLocation>
        <location evidence="11">Golgi apparatus</location>
        <location evidence="11">trans-Golgi network</location>
    </subcellularLocation>
    <text evidence="1">Translocation to the cell membrane is required for kinase activation.</text>
</comment>
<comment type="PTM">
    <text evidence="1 20">Phosphorylated at Ser-403 and Ser-407 by MAPK13 during regulation of insulin secretion in pancreatic beta cells (By similarity). Phosphorylated by DAPK1 (By similarity). Phosphorylated at Tyr-93 and by ABL at Tyr-469, which primes the kinase in response to oxidative stress, and promotes a second step activating phosphorylation at Ser-744/Ser-748 by PKRD (By similarity). Phosphorylated at Ser-916 upon S.enterica infection in macrophages (PubMed:27184844).</text>
</comment>
<comment type="similarity">
    <text evidence="22">Belongs to the protein kinase superfamily. CAMK Ser/Thr protein kinase family. PKD subfamily.</text>
</comment>
<sequence length="918" mass="102037">MSVPPLLRPPSPLLPAAAAVAAAAAALVPGSGPAPFPAPGAAPAGGISFHLQIGLSREPVLLLQDSSGDYSLAHVREMACSIVDQKFPECGFYGLYDKILLFRHDPASDNILQLVKIASDIQEGDLIEVVLSASATFEDFQIRPHALFVHSYRAPAFCDHCGEMLWGLVRQGLKCEGCGLNYHKRCAFKIPNNCSGVRRRRLSNVSLTGLGTVRTASAEFSTSVPDEPLLSPVSPGFEQKSPSESFIGREKRSNSQSYIGRPIQLDKLLMSKVKVPHTFVIHSYTRPTVCQFCKKLLKGLFRQGLQCKDCRFNCHKRCAPKVPNNCLGEVTINGELLSPGAESDVVMEEGSDDNDSERNSGLMDDMDEAMVQDTEMALAEGQSGGAEMQDPDADQEDSNRTISPSTSNNIPLMRVVQSVKHTKRRSSTVMKEGWMVHYTSKDTLRKRHYWRLDSKCITLFQNDTGSRYYKEIPLSEILCLEPAKPSALTPVGATPHCFEITTANVVYYVGENVVNPSSSPPNNSVLPSGIGPDVARMWEVAIQHALMPVIPKGSSVGSGSNSHKDISVSISVSNCQIQENVDISTVYQIFPDEVLGSGQFGIVYGGKHRKTGRDVAIKIIDKLRFPTKQESQLRNEVAILQNLHHPGVVNLECMFETPERVFVVMEKLHGDMLEMILSSEKGRLPEHITKFLITQILVALRHLHFKNIVHCDLKPENVLLASADPFPQVKLCDFGFARIIGEKSFRRSVVGTPAYLAPEVLRNKGYNRSLDMWSVGVIIYVSLSGTFPFNEDEDIHDQIQNAAFMYPPNPWKEISHEAIDLINNLLQVKMRKRYSVDKTLSHPWLQDYQTWLDLRELECRIGERYITHESDDSRWEQYAGEQGLQYPAHLISLSASHSDSPEAEEREMKALSERVSIL</sequence>
<evidence type="ECO:0000250" key="1">
    <source>
        <dbReference type="UniProtKB" id="Q15139"/>
    </source>
</evidence>
<evidence type="ECO:0000250" key="2">
    <source>
        <dbReference type="UniProtKB" id="Q8BZ03"/>
    </source>
</evidence>
<evidence type="ECO:0000250" key="3">
    <source>
        <dbReference type="UniProtKB" id="Q8K1Y2"/>
    </source>
</evidence>
<evidence type="ECO:0000250" key="4">
    <source>
        <dbReference type="UniProtKB" id="Q9BZL6"/>
    </source>
</evidence>
<evidence type="ECO:0000255" key="5">
    <source>
        <dbReference type="PROSITE-ProRule" id="PRU00145"/>
    </source>
</evidence>
<evidence type="ECO:0000255" key="6">
    <source>
        <dbReference type="PROSITE-ProRule" id="PRU00159"/>
    </source>
</evidence>
<evidence type="ECO:0000255" key="7">
    <source>
        <dbReference type="PROSITE-ProRule" id="PRU00226"/>
    </source>
</evidence>
<evidence type="ECO:0000255" key="8">
    <source>
        <dbReference type="PROSITE-ProRule" id="PRU10027"/>
    </source>
</evidence>
<evidence type="ECO:0000256" key="9">
    <source>
        <dbReference type="SAM" id="MobiDB-lite"/>
    </source>
</evidence>
<evidence type="ECO:0000269" key="10">
    <source>
    </source>
</evidence>
<evidence type="ECO:0000269" key="11">
    <source>
    </source>
</evidence>
<evidence type="ECO:0000269" key="12">
    <source>
    </source>
</evidence>
<evidence type="ECO:0000269" key="13">
    <source>
    </source>
</evidence>
<evidence type="ECO:0000269" key="14">
    <source>
    </source>
</evidence>
<evidence type="ECO:0000269" key="15">
    <source>
    </source>
</evidence>
<evidence type="ECO:0000269" key="16">
    <source>
    </source>
</evidence>
<evidence type="ECO:0000269" key="17">
    <source>
    </source>
</evidence>
<evidence type="ECO:0000269" key="18">
    <source>
    </source>
</evidence>
<evidence type="ECO:0000269" key="19">
    <source>
    </source>
</evidence>
<evidence type="ECO:0000269" key="20">
    <source>
    </source>
</evidence>
<evidence type="ECO:0000269" key="21">
    <source>
    </source>
</evidence>
<evidence type="ECO:0000305" key="22"/>
<evidence type="ECO:0007744" key="23">
    <source>
    </source>
</evidence>
<dbReference type="EC" id="2.7.11.13"/>
<dbReference type="EMBL" id="Z34524">
    <property type="protein sequence ID" value="CAA84283.1"/>
    <property type="molecule type" value="mRNA"/>
</dbReference>
<dbReference type="EMBL" id="AC099603">
    <property type="status" value="NOT_ANNOTATED_CDS"/>
    <property type="molecule type" value="Genomic_DNA"/>
</dbReference>
<dbReference type="EMBL" id="AC154543">
    <property type="status" value="NOT_ANNOTATED_CDS"/>
    <property type="molecule type" value="Genomic_DNA"/>
</dbReference>
<dbReference type="EMBL" id="CT009740">
    <property type="status" value="NOT_ANNOTATED_CDS"/>
    <property type="molecule type" value="Genomic_DNA"/>
</dbReference>
<dbReference type="EMBL" id="CT010578">
    <property type="status" value="NOT_ANNOTATED_CDS"/>
    <property type="molecule type" value="Genomic_DNA"/>
</dbReference>
<dbReference type="CCDS" id="CCDS49059.1"/>
<dbReference type="PIR" id="I48719">
    <property type="entry name" value="I48719"/>
</dbReference>
<dbReference type="RefSeq" id="NP_032884.2">
    <property type="nucleotide sequence ID" value="NM_008858.4"/>
</dbReference>
<dbReference type="SMR" id="Q62101"/>
<dbReference type="BioGRID" id="202201">
    <property type="interactions" value="4"/>
</dbReference>
<dbReference type="CORUM" id="Q62101"/>
<dbReference type="FunCoup" id="Q62101">
    <property type="interactions" value="1475"/>
</dbReference>
<dbReference type="IntAct" id="Q62101">
    <property type="interactions" value="5"/>
</dbReference>
<dbReference type="STRING" id="10090.ENSMUSP00000002765"/>
<dbReference type="iPTMnet" id="Q62101"/>
<dbReference type="PhosphoSitePlus" id="Q62101"/>
<dbReference type="jPOST" id="Q62101"/>
<dbReference type="PaxDb" id="10090-ENSMUSP00000002765"/>
<dbReference type="PeptideAtlas" id="Q62101"/>
<dbReference type="ProteomicsDB" id="264861"/>
<dbReference type="Pumba" id="Q62101"/>
<dbReference type="Antibodypedia" id="4337">
    <property type="antibodies" value="990 antibodies from 40 providers"/>
</dbReference>
<dbReference type="DNASU" id="18760"/>
<dbReference type="Ensembl" id="ENSMUST00000002765.9">
    <property type="protein sequence ID" value="ENSMUSP00000002765.8"/>
    <property type="gene ID" value="ENSMUSG00000002688.9"/>
</dbReference>
<dbReference type="GeneID" id="18760"/>
<dbReference type="KEGG" id="mmu:18760"/>
<dbReference type="UCSC" id="uc007nmj.1">
    <property type="organism name" value="mouse"/>
</dbReference>
<dbReference type="AGR" id="MGI:99879"/>
<dbReference type="CTD" id="5587"/>
<dbReference type="MGI" id="MGI:99879">
    <property type="gene designation" value="Prkd1"/>
</dbReference>
<dbReference type="VEuPathDB" id="HostDB:ENSMUSG00000002688"/>
<dbReference type="eggNOG" id="KOG4236">
    <property type="taxonomic scope" value="Eukaryota"/>
</dbReference>
<dbReference type="GeneTree" id="ENSGT00950000183024"/>
<dbReference type="HOGENOM" id="CLU_009772_1_0_1"/>
<dbReference type="InParanoid" id="Q62101"/>
<dbReference type="OMA" id="VARRWEM"/>
<dbReference type="OrthoDB" id="74314at2759"/>
<dbReference type="PhylomeDB" id="Q62101"/>
<dbReference type="TreeFam" id="TF314320"/>
<dbReference type="BRENDA" id="2.7.11.1">
    <property type="organism ID" value="3474"/>
</dbReference>
<dbReference type="BioGRID-ORCS" id="18760">
    <property type="hits" value="2 hits in 81 CRISPR screens"/>
</dbReference>
<dbReference type="ChiTaRS" id="Prkd1">
    <property type="organism name" value="mouse"/>
</dbReference>
<dbReference type="PRO" id="PR:Q62101"/>
<dbReference type="Proteomes" id="UP000000589">
    <property type="component" value="Chromosome 12"/>
</dbReference>
<dbReference type="RNAct" id="Q62101">
    <property type="molecule type" value="protein"/>
</dbReference>
<dbReference type="Bgee" id="ENSMUSG00000002688">
    <property type="expression patterns" value="Expressed in indifferent gonad and 250 other cell types or tissues"/>
</dbReference>
<dbReference type="GO" id="GO:0000421">
    <property type="term" value="C:autophagosome membrane"/>
    <property type="evidence" value="ECO:0007669"/>
    <property type="project" value="Ensembl"/>
</dbReference>
<dbReference type="GO" id="GO:0005938">
    <property type="term" value="C:cell cortex"/>
    <property type="evidence" value="ECO:0000314"/>
    <property type="project" value="MGI"/>
</dbReference>
<dbReference type="GO" id="GO:0005911">
    <property type="term" value="C:cell-cell junction"/>
    <property type="evidence" value="ECO:0000314"/>
    <property type="project" value="MGI"/>
</dbReference>
<dbReference type="GO" id="GO:0005737">
    <property type="term" value="C:cytoplasm"/>
    <property type="evidence" value="ECO:0000314"/>
    <property type="project" value="MGI"/>
</dbReference>
<dbReference type="GO" id="GO:0005829">
    <property type="term" value="C:cytosol"/>
    <property type="evidence" value="ECO:0000314"/>
    <property type="project" value="UniProtKB"/>
</dbReference>
<dbReference type="GO" id="GO:0005634">
    <property type="term" value="C:nucleus"/>
    <property type="evidence" value="ECO:0000314"/>
    <property type="project" value="MGI"/>
</dbReference>
<dbReference type="GO" id="GO:0048471">
    <property type="term" value="C:perinuclear region of cytoplasm"/>
    <property type="evidence" value="ECO:0007669"/>
    <property type="project" value="Ensembl"/>
</dbReference>
<dbReference type="GO" id="GO:0005886">
    <property type="term" value="C:plasma membrane"/>
    <property type="evidence" value="ECO:0000314"/>
    <property type="project" value="UniProtKB"/>
</dbReference>
<dbReference type="GO" id="GO:0005802">
    <property type="term" value="C:trans-Golgi network"/>
    <property type="evidence" value="ECO:0000314"/>
    <property type="project" value="UniProtKB"/>
</dbReference>
<dbReference type="GO" id="GO:0030018">
    <property type="term" value="C:Z disc"/>
    <property type="evidence" value="ECO:0007669"/>
    <property type="project" value="Ensembl"/>
</dbReference>
<dbReference type="GO" id="GO:0005524">
    <property type="term" value="F:ATP binding"/>
    <property type="evidence" value="ECO:0007669"/>
    <property type="project" value="UniProtKB-KW"/>
</dbReference>
<dbReference type="GO" id="GO:0004697">
    <property type="term" value="F:diacylglycerol-dependent serine/threonine kinase activity"/>
    <property type="evidence" value="ECO:0007669"/>
    <property type="project" value="UniProtKB-EC"/>
</dbReference>
<dbReference type="GO" id="GO:0031072">
    <property type="term" value="F:heat shock protein binding"/>
    <property type="evidence" value="ECO:0007669"/>
    <property type="project" value="Ensembl"/>
</dbReference>
<dbReference type="GO" id="GO:0042802">
    <property type="term" value="F:identical protein binding"/>
    <property type="evidence" value="ECO:0007669"/>
    <property type="project" value="Ensembl"/>
</dbReference>
<dbReference type="GO" id="GO:0141038">
    <property type="term" value="F:phosphatidylinositol 3-kinase activator activity"/>
    <property type="evidence" value="ECO:0007669"/>
    <property type="project" value="Ensembl"/>
</dbReference>
<dbReference type="GO" id="GO:0005080">
    <property type="term" value="F:protein kinase C binding"/>
    <property type="evidence" value="ECO:0007669"/>
    <property type="project" value="Ensembl"/>
</dbReference>
<dbReference type="GO" id="GO:0106310">
    <property type="term" value="F:protein serine kinase activity"/>
    <property type="evidence" value="ECO:0007669"/>
    <property type="project" value="Ensembl"/>
</dbReference>
<dbReference type="GO" id="GO:0004674">
    <property type="term" value="F:protein serine/threonine kinase activity"/>
    <property type="evidence" value="ECO:0000314"/>
    <property type="project" value="UniProtKB"/>
</dbReference>
<dbReference type="GO" id="GO:0008270">
    <property type="term" value="F:zinc ion binding"/>
    <property type="evidence" value="ECO:0007669"/>
    <property type="project" value="UniProtKB-KW"/>
</dbReference>
<dbReference type="GO" id="GO:0001525">
    <property type="term" value="P:angiogenesis"/>
    <property type="evidence" value="ECO:0007669"/>
    <property type="project" value="UniProtKB-KW"/>
</dbReference>
<dbReference type="GO" id="GO:0006915">
    <property type="term" value="P:apoptotic process"/>
    <property type="evidence" value="ECO:0007669"/>
    <property type="project" value="UniProtKB-KW"/>
</dbReference>
<dbReference type="GO" id="GO:0030154">
    <property type="term" value="P:cell differentiation"/>
    <property type="evidence" value="ECO:0007669"/>
    <property type="project" value="UniProtKB-KW"/>
</dbReference>
<dbReference type="GO" id="GO:0034198">
    <property type="term" value="P:cellular response to amino acid starvation"/>
    <property type="evidence" value="ECO:0007669"/>
    <property type="project" value="Ensembl"/>
</dbReference>
<dbReference type="GO" id="GO:1904385">
    <property type="term" value="P:cellular response to angiotensin"/>
    <property type="evidence" value="ECO:0007669"/>
    <property type="project" value="Ensembl"/>
</dbReference>
<dbReference type="GO" id="GO:1990859">
    <property type="term" value="P:cellular response to endothelin"/>
    <property type="evidence" value="ECO:0007669"/>
    <property type="project" value="Ensembl"/>
</dbReference>
<dbReference type="GO" id="GO:0071447">
    <property type="term" value="P:cellular response to hydroperoxide"/>
    <property type="evidence" value="ECO:0007669"/>
    <property type="project" value="Ensembl"/>
</dbReference>
<dbReference type="GO" id="GO:0071874">
    <property type="term" value="P:cellular response to norepinephrine stimulus"/>
    <property type="evidence" value="ECO:0007669"/>
    <property type="project" value="Ensembl"/>
</dbReference>
<dbReference type="GO" id="GO:0034599">
    <property type="term" value="P:cellular response to oxidative stress"/>
    <property type="evidence" value="ECO:0000250"/>
    <property type="project" value="UniProtKB"/>
</dbReference>
<dbReference type="GO" id="GO:1904628">
    <property type="term" value="P:cellular response to phorbol 13-acetate 12-myristate"/>
    <property type="evidence" value="ECO:0007669"/>
    <property type="project" value="Ensembl"/>
</dbReference>
<dbReference type="GO" id="GO:0035924">
    <property type="term" value="P:cellular response to vascular endothelial growth factor stimulus"/>
    <property type="evidence" value="ECO:0000250"/>
    <property type="project" value="UniProtKB"/>
</dbReference>
<dbReference type="GO" id="GO:0050829">
    <property type="term" value="P:defense response to Gram-negative bacterium"/>
    <property type="evidence" value="ECO:0000315"/>
    <property type="project" value="UniProtKB"/>
</dbReference>
<dbReference type="GO" id="GO:0007030">
    <property type="term" value="P:Golgi organization"/>
    <property type="evidence" value="ECO:0000250"/>
    <property type="project" value="UniProtKB"/>
</dbReference>
<dbReference type="GO" id="GO:0048193">
    <property type="term" value="P:Golgi vesicle transport"/>
    <property type="evidence" value="ECO:0000315"/>
    <property type="project" value="UniProtKB"/>
</dbReference>
<dbReference type="GO" id="GO:0006954">
    <property type="term" value="P:inflammatory response"/>
    <property type="evidence" value="ECO:0007669"/>
    <property type="project" value="UniProtKB-KW"/>
</dbReference>
<dbReference type="GO" id="GO:0045087">
    <property type="term" value="P:innate immune response"/>
    <property type="evidence" value="ECO:0007669"/>
    <property type="project" value="UniProtKB-KW"/>
</dbReference>
<dbReference type="GO" id="GO:0007399">
    <property type="term" value="P:nervous system development"/>
    <property type="evidence" value="ECO:0007669"/>
    <property type="project" value="UniProtKB-KW"/>
</dbReference>
<dbReference type="GO" id="GO:0045766">
    <property type="term" value="P:positive regulation of angiogenesis"/>
    <property type="evidence" value="ECO:0000250"/>
    <property type="project" value="UniProtKB"/>
</dbReference>
<dbReference type="GO" id="GO:0010508">
    <property type="term" value="P:positive regulation of autophagy"/>
    <property type="evidence" value="ECO:0007669"/>
    <property type="project" value="Ensembl"/>
</dbReference>
<dbReference type="GO" id="GO:0043536">
    <property type="term" value="P:positive regulation of blood vessel endothelial cell migration"/>
    <property type="evidence" value="ECO:0007669"/>
    <property type="project" value="Ensembl"/>
</dbReference>
<dbReference type="GO" id="GO:0043123">
    <property type="term" value="P:positive regulation of canonical NF-kappaB signal transduction"/>
    <property type="evidence" value="ECO:0000250"/>
    <property type="project" value="UniProtKB"/>
</dbReference>
<dbReference type="GO" id="GO:0045793">
    <property type="term" value="P:positive regulation of cell size"/>
    <property type="evidence" value="ECO:0007669"/>
    <property type="project" value="Ensembl"/>
</dbReference>
<dbReference type="GO" id="GO:2001028">
    <property type="term" value="P:positive regulation of endothelial cell chemotaxis"/>
    <property type="evidence" value="ECO:0007669"/>
    <property type="project" value="Ensembl"/>
</dbReference>
<dbReference type="GO" id="GO:0010595">
    <property type="term" value="P:positive regulation of endothelial cell migration"/>
    <property type="evidence" value="ECO:0000250"/>
    <property type="project" value="UniProtKB"/>
</dbReference>
<dbReference type="GO" id="GO:0001938">
    <property type="term" value="P:positive regulation of endothelial cell proliferation"/>
    <property type="evidence" value="ECO:0007669"/>
    <property type="project" value="Ensembl"/>
</dbReference>
<dbReference type="GO" id="GO:0010628">
    <property type="term" value="P:positive regulation of gene expression"/>
    <property type="evidence" value="ECO:0007669"/>
    <property type="project" value="Ensembl"/>
</dbReference>
<dbReference type="GO" id="GO:0010976">
    <property type="term" value="P:positive regulation of neuron projection development"/>
    <property type="evidence" value="ECO:0000250"/>
    <property type="project" value="UniProtKB"/>
</dbReference>
<dbReference type="GO" id="GO:0051092">
    <property type="term" value="P:positive regulation of NF-kappaB transcription factor activity"/>
    <property type="evidence" value="ECO:0000250"/>
    <property type="project" value="UniProtKB"/>
</dbReference>
<dbReference type="GO" id="GO:1900227">
    <property type="term" value="P:positive regulation of NLRP3 inflammasome complex assembly"/>
    <property type="evidence" value="ECO:0000314"/>
    <property type="project" value="UniProtKB"/>
</dbReference>
<dbReference type="GO" id="GO:0045669">
    <property type="term" value="P:positive regulation of osteoblast differentiation"/>
    <property type="evidence" value="ECO:0000315"/>
    <property type="project" value="UniProtKB"/>
</dbReference>
<dbReference type="GO" id="GO:0090277">
    <property type="term" value="P:positive regulation of peptide hormone secretion"/>
    <property type="evidence" value="ECO:0007669"/>
    <property type="project" value="Ensembl"/>
</dbReference>
<dbReference type="GO" id="GO:0051897">
    <property type="term" value="P:positive regulation of phosphatidylinositol 3-kinase/protein kinase B signal transduction"/>
    <property type="evidence" value="ECO:0007669"/>
    <property type="project" value="Ensembl"/>
</dbReference>
<dbReference type="GO" id="GO:0046827">
    <property type="term" value="P:positive regulation of protein export from nucleus"/>
    <property type="evidence" value="ECO:0007669"/>
    <property type="project" value="Ensembl"/>
</dbReference>
<dbReference type="GO" id="GO:0042307">
    <property type="term" value="P:positive regulation of protein import into nucleus"/>
    <property type="evidence" value="ECO:0000315"/>
    <property type="project" value="UniProtKB"/>
</dbReference>
<dbReference type="GO" id="GO:0060298">
    <property type="term" value="P:positive regulation of sarcomere organization"/>
    <property type="evidence" value="ECO:0007669"/>
    <property type="project" value="Ensembl"/>
</dbReference>
<dbReference type="GO" id="GO:0045944">
    <property type="term" value="P:positive regulation of transcription by RNA polymerase II"/>
    <property type="evidence" value="ECO:0007669"/>
    <property type="project" value="Ensembl"/>
</dbReference>
<dbReference type="GO" id="GO:0046777">
    <property type="term" value="P:protein autophosphorylation"/>
    <property type="evidence" value="ECO:0000250"/>
    <property type="project" value="UniProtKB"/>
</dbReference>
<dbReference type="GO" id="GO:0010837">
    <property type="term" value="P:regulation of keratinocyte proliferation"/>
    <property type="evidence" value="ECO:0000315"/>
    <property type="project" value="UniProtKB"/>
</dbReference>
<dbReference type="GO" id="GO:0051279">
    <property type="term" value="P:regulation of release of sequestered calcium ion into cytosol"/>
    <property type="evidence" value="ECO:0000314"/>
    <property type="project" value="MGI"/>
</dbReference>
<dbReference type="GO" id="GO:0014723">
    <property type="term" value="P:regulation of skeletal muscle contraction by modulation of calcium ion sensitivity of myofibril"/>
    <property type="evidence" value="ECO:0007669"/>
    <property type="project" value="Ensembl"/>
</dbReference>
<dbReference type="GO" id="GO:0048010">
    <property type="term" value="P:vascular endothelial growth factor receptor signaling pathway"/>
    <property type="evidence" value="ECO:0007669"/>
    <property type="project" value="Ensembl"/>
</dbReference>
<dbReference type="CDD" id="cd20839">
    <property type="entry name" value="C1_PKD1_rpt1"/>
    <property type="match status" value="1"/>
</dbReference>
<dbReference type="CDD" id="cd20842">
    <property type="entry name" value="C1_PKD1_rpt2"/>
    <property type="match status" value="1"/>
</dbReference>
<dbReference type="CDD" id="cd01239">
    <property type="entry name" value="PH_PKD"/>
    <property type="match status" value="1"/>
</dbReference>
<dbReference type="CDD" id="cd14082">
    <property type="entry name" value="STKc_PKD"/>
    <property type="match status" value="1"/>
</dbReference>
<dbReference type="FunFam" id="1.10.510.10:FF:000151">
    <property type="entry name" value="Serine/threonine-protein kinase"/>
    <property type="match status" value="1"/>
</dbReference>
<dbReference type="FunFam" id="2.30.29.30:FF:000056">
    <property type="entry name" value="Serine/threonine-protein kinase"/>
    <property type="match status" value="1"/>
</dbReference>
<dbReference type="FunFam" id="3.30.200.20:FF:000137">
    <property type="entry name" value="Serine/threonine-protein kinase"/>
    <property type="match status" value="1"/>
</dbReference>
<dbReference type="FunFam" id="3.30.60.20:FF:000007">
    <property type="entry name" value="Serine/threonine-protein kinase"/>
    <property type="match status" value="1"/>
</dbReference>
<dbReference type="FunFam" id="3.30.60.20:FF:000019">
    <property type="entry name" value="Serine/threonine-protein kinase"/>
    <property type="match status" value="1"/>
</dbReference>
<dbReference type="Gene3D" id="3.30.60.20">
    <property type="match status" value="2"/>
</dbReference>
<dbReference type="Gene3D" id="2.30.29.30">
    <property type="entry name" value="Pleckstrin-homology domain (PH domain)/Phosphotyrosine-binding domain (PTB)"/>
    <property type="match status" value="1"/>
</dbReference>
<dbReference type="Gene3D" id="1.10.510.10">
    <property type="entry name" value="Transferase(Phosphotransferase) domain 1"/>
    <property type="match status" value="1"/>
</dbReference>
<dbReference type="InterPro" id="IPR046349">
    <property type="entry name" value="C1-like_sf"/>
</dbReference>
<dbReference type="InterPro" id="IPR020454">
    <property type="entry name" value="DAG/PE-bd"/>
</dbReference>
<dbReference type="InterPro" id="IPR011009">
    <property type="entry name" value="Kinase-like_dom_sf"/>
</dbReference>
<dbReference type="InterPro" id="IPR002219">
    <property type="entry name" value="PE/DAG-bd"/>
</dbReference>
<dbReference type="InterPro" id="IPR011993">
    <property type="entry name" value="PH-like_dom_sf"/>
</dbReference>
<dbReference type="InterPro" id="IPR001849">
    <property type="entry name" value="PH_domain"/>
</dbReference>
<dbReference type="InterPro" id="IPR000719">
    <property type="entry name" value="Prot_kinase_dom"/>
</dbReference>
<dbReference type="InterPro" id="IPR017441">
    <property type="entry name" value="Protein_kinase_ATP_BS"/>
</dbReference>
<dbReference type="InterPro" id="IPR015727">
    <property type="entry name" value="Protein_Kinase_C_mu-related"/>
</dbReference>
<dbReference type="InterPro" id="IPR008271">
    <property type="entry name" value="Ser/Thr_kinase_AS"/>
</dbReference>
<dbReference type="PANTHER" id="PTHR22968">
    <property type="entry name" value="PROTEIN KINASE C, MU"/>
    <property type="match status" value="1"/>
</dbReference>
<dbReference type="PANTHER" id="PTHR22968:SF9">
    <property type="entry name" value="SERINE_THREONINE-PROTEIN KINASE D1"/>
    <property type="match status" value="1"/>
</dbReference>
<dbReference type="Pfam" id="PF00130">
    <property type="entry name" value="C1_1"/>
    <property type="match status" value="2"/>
</dbReference>
<dbReference type="Pfam" id="PF00169">
    <property type="entry name" value="PH"/>
    <property type="match status" value="1"/>
</dbReference>
<dbReference type="Pfam" id="PF00069">
    <property type="entry name" value="Pkinase"/>
    <property type="match status" value="1"/>
</dbReference>
<dbReference type="PIRSF" id="PIRSF000552">
    <property type="entry name" value="PKC_mu_nu_D2"/>
    <property type="match status" value="1"/>
</dbReference>
<dbReference type="PRINTS" id="PR00008">
    <property type="entry name" value="DAGPEDOMAIN"/>
</dbReference>
<dbReference type="SMART" id="SM00109">
    <property type="entry name" value="C1"/>
    <property type="match status" value="2"/>
</dbReference>
<dbReference type="SMART" id="SM00233">
    <property type="entry name" value="PH"/>
    <property type="match status" value="1"/>
</dbReference>
<dbReference type="SMART" id="SM00220">
    <property type="entry name" value="S_TKc"/>
    <property type="match status" value="1"/>
</dbReference>
<dbReference type="SUPFAM" id="SSF57889">
    <property type="entry name" value="Cysteine-rich domain"/>
    <property type="match status" value="2"/>
</dbReference>
<dbReference type="SUPFAM" id="SSF50729">
    <property type="entry name" value="PH domain-like"/>
    <property type="match status" value="1"/>
</dbReference>
<dbReference type="SUPFAM" id="SSF56112">
    <property type="entry name" value="Protein kinase-like (PK-like)"/>
    <property type="match status" value="1"/>
</dbReference>
<dbReference type="PROSITE" id="PS50003">
    <property type="entry name" value="PH_DOMAIN"/>
    <property type="match status" value="1"/>
</dbReference>
<dbReference type="PROSITE" id="PS00107">
    <property type="entry name" value="PROTEIN_KINASE_ATP"/>
    <property type="match status" value="1"/>
</dbReference>
<dbReference type="PROSITE" id="PS50011">
    <property type="entry name" value="PROTEIN_KINASE_DOM"/>
    <property type="match status" value="1"/>
</dbReference>
<dbReference type="PROSITE" id="PS00108">
    <property type="entry name" value="PROTEIN_KINASE_ST"/>
    <property type="match status" value="1"/>
</dbReference>
<dbReference type="PROSITE" id="PS00479">
    <property type="entry name" value="ZF_DAG_PE_1"/>
    <property type="match status" value="2"/>
</dbReference>
<dbReference type="PROSITE" id="PS50081">
    <property type="entry name" value="ZF_DAG_PE_2"/>
    <property type="match status" value="2"/>
</dbReference>
<organism>
    <name type="scientific">Mus musculus</name>
    <name type="common">Mouse</name>
    <dbReference type="NCBI Taxonomy" id="10090"/>
    <lineage>
        <taxon>Eukaryota</taxon>
        <taxon>Metazoa</taxon>
        <taxon>Chordata</taxon>
        <taxon>Craniata</taxon>
        <taxon>Vertebrata</taxon>
        <taxon>Euteleostomi</taxon>
        <taxon>Mammalia</taxon>
        <taxon>Eutheria</taxon>
        <taxon>Euarchontoglires</taxon>
        <taxon>Glires</taxon>
        <taxon>Rodentia</taxon>
        <taxon>Myomorpha</taxon>
        <taxon>Muroidea</taxon>
        <taxon>Muridae</taxon>
        <taxon>Murinae</taxon>
        <taxon>Mus</taxon>
        <taxon>Mus</taxon>
    </lineage>
</organism>
<name>KPCD1_MOUSE</name>
<reference key="1">
    <citation type="journal article" date="1994" name="Proc. Natl. Acad. Sci. U.S.A.">
        <title>Molecular cloning and characterization of protein kinase D: a target for diacylglycerol and phorbol esters with a distinctive catalytic domain.</title>
        <authorList>
            <person name="Valverde A.M."/>
            <person name="Sinnet-Smith J."/>
            <person name="Van Lint J."/>
            <person name="Rozengurt E."/>
        </authorList>
    </citation>
    <scope>NUCLEOTIDE SEQUENCE [MRNA]</scope>
    <source>
        <strain>BALB/cJ</strain>
        <tissue>Lung</tissue>
    </source>
</reference>
<reference key="2">
    <citation type="journal article" date="2009" name="PLoS Biol.">
        <title>Lineage-specific biology revealed by a finished genome assembly of the mouse.</title>
        <authorList>
            <person name="Church D.M."/>
            <person name="Goodstadt L."/>
            <person name="Hillier L.W."/>
            <person name="Zody M.C."/>
            <person name="Goldstein S."/>
            <person name="She X."/>
            <person name="Bult C.J."/>
            <person name="Agarwala R."/>
            <person name="Cherry J.L."/>
            <person name="DiCuccio M."/>
            <person name="Hlavina W."/>
            <person name="Kapustin Y."/>
            <person name="Meric P."/>
            <person name="Maglott D."/>
            <person name="Birtle Z."/>
            <person name="Marques A.C."/>
            <person name="Graves T."/>
            <person name="Zhou S."/>
            <person name="Teague B."/>
            <person name="Potamousis K."/>
            <person name="Churas C."/>
            <person name="Place M."/>
            <person name="Herschleb J."/>
            <person name="Runnheim R."/>
            <person name="Forrest D."/>
            <person name="Amos-Landgraf J."/>
            <person name="Schwartz D.C."/>
            <person name="Cheng Z."/>
            <person name="Lindblad-Toh K."/>
            <person name="Eichler E.E."/>
            <person name="Ponting C.P."/>
        </authorList>
    </citation>
    <scope>NUCLEOTIDE SEQUENCE [LARGE SCALE GENOMIC DNA]</scope>
    <source>
        <strain>C57BL/6J</strain>
    </source>
</reference>
<reference key="3">
    <citation type="journal article" date="1999" name="J. Biol. Chem.">
        <title>Characterization of serine 916 as an in vivo autophosphorylation site for protein kinase D/protein kinase Cmu.</title>
        <authorList>
            <person name="Matthews S.A."/>
            <person name="Rozengurt E."/>
            <person name="Cantrell D."/>
        </authorList>
    </citation>
    <scope>PHOSPHORYLATION AT SER-916</scope>
</reference>
<reference key="4">
    <citation type="journal article" date="2001" name="Cell">
        <title>Protein kinase D regulates the fission of cell surface destined transport carriers from the trans-Golgi network.</title>
        <authorList>
            <person name="Liljedahl M."/>
            <person name="Maeda Y."/>
            <person name="Colanzi A."/>
            <person name="Ayala I."/>
            <person name="Van Lint J."/>
            <person name="Malhotra V."/>
        </authorList>
    </citation>
    <scope>FUNCTION IN REGULATION OF TRANS-GOLGI NETWORK</scope>
    <scope>SUBCELLULAR LOCATION</scope>
</reference>
<reference key="5">
    <citation type="journal article" date="2001" name="J. Biol. Chem.">
        <title>Activation loop Ser744 and Ser748 in protein kinase D are transphosphorylated in vivo.</title>
        <authorList>
            <person name="Waldron R.T."/>
            <person name="Rey O."/>
            <person name="Iglesias T."/>
            <person name="Tugal T."/>
            <person name="Cantrell D."/>
            <person name="Rozengurt E."/>
        </authorList>
    </citation>
    <scope>PHOSPHORYLATION AT SER-744 AND SER-748</scope>
</reference>
<reference key="6">
    <citation type="journal article" date="2002" name="Mol. Cell. Biol.">
        <title>The RAS effector RIN1 directly competes with RAF and is regulated by 14-3-3 proteins.</title>
        <authorList>
            <person name="Wang Y."/>
            <person name="Waldron R.T."/>
            <person name="Dhaka A."/>
            <person name="Patel A."/>
            <person name="Riley M.M."/>
            <person name="Rozengurt E."/>
            <person name="Colicelli J."/>
        </authorList>
    </citation>
    <scope>FUNCTION IN RIN1 PHOSPHORYLATION</scope>
</reference>
<reference key="7">
    <citation type="journal article" date="2003" name="J. Biol. Chem.">
        <title>Protein kinase C phosphorylates protein kinase D activation loop Ser744 and Ser748 and releases autoinhibition by the pleckstrin homology domain.</title>
        <authorList>
            <person name="Waldron R.T."/>
            <person name="Rozengurt E."/>
        </authorList>
    </citation>
    <scope>FUNCTION</scope>
    <scope>ACTIVITY REGULATION</scope>
    <scope>MUTAGENESIS OF SER-744 AND SER-748</scope>
    <scope>PHOSPHORYLATION AT SER-744 AND SER-748</scope>
</reference>
<reference key="8">
    <citation type="journal article" date="2004" name="EMBO J.">
        <title>PKD1/PKCmu promotes alphavbeta3 integrin recycling and delivery to nascent focal adhesions.</title>
        <authorList>
            <person name="Woods A.J."/>
            <person name="White D.P."/>
            <person name="Caswell P.T."/>
            <person name="Norman J.C."/>
        </authorList>
    </citation>
    <scope>FUNCTION IN CELL MIGRATION</scope>
</reference>
<reference key="9">
    <citation type="journal article" date="2004" name="J. Biol. Chem.">
        <title>Protein kinase D potentiates DNA synthesis induced by Gq-coupled receptors by increasing the duration of ERK signaling in swiss 3T3 cells.</title>
        <authorList>
            <person name="Sinnett-Smith J."/>
            <person name="Zhukova E."/>
            <person name="Hsieh N."/>
            <person name="Jiang X."/>
            <person name="Rozengurt E."/>
        </authorList>
    </citation>
    <scope>FUNCTION IN CELL PROLIFERATION</scope>
</reference>
<reference key="10">
    <citation type="journal article" date="2009" name="J. Biol. Chem.">
        <title>Bone morphogenic protein 2 activates protein kinase D to regulate histone deacetylase 7 localization and repression of Runx2.</title>
        <authorList>
            <person name="Jensen E.D."/>
            <person name="Gopalakrishnan R."/>
            <person name="Westendorf J.J."/>
        </authorList>
    </citation>
    <scope>FUNCTION IN OSTEOBLAST DIFFERENTIATION</scope>
</reference>
<reference key="11">
    <citation type="journal article" date="2010" name="Cell">
        <title>A tissue-specific atlas of mouse protein phosphorylation and expression.</title>
        <authorList>
            <person name="Huttlin E.L."/>
            <person name="Jedrychowski M.P."/>
            <person name="Elias J.E."/>
            <person name="Goswami T."/>
            <person name="Rad R."/>
            <person name="Beausoleil S.A."/>
            <person name="Villen J."/>
            <person name="Haas W."/>
            <person name="Sowa M.E."/>
            <person name="Gygi S.P."/>
        </authorList>
    </citation>
    <scope>PHOSPHORYLATION [LARGE SCALE ANALYSIS] AT SER-203 AND SER-206</scope>
    <scope>IDENTIFICATION BY MASS SPECTROMETRY [LARGE SCALE ANALYSIS]</scope>
    <source>
        <tissue>Brain</tissue>
        <tissue>Brown adipose tissue</tissue>
        <tissue>Kidney</tissue>
        <tissue>Lung</tissue>
        <tissue>Pancreas</tissue>
        <tissue>Spleen</tissue>
        <tissue>Testis</tissue>
    </source>
</reference>
<reference key="12">
    <citation type="journal article" date="2010" name="J. Biol. Chem.">
        <title>Protein kinase D is implicated in the reversible commitment to differentiation in primary cultures of mouse keratinocytes.</title>
        <authorList>
            <person name="Jadali A."/>
            <person name="Ghazizadeh S."/>
        </authorList>
    </citation>
    <scope>FUNCTION IN CELL PROLIFERATION</scope>
</reference>
<reference key="13">
    <citation type="journal article" date="2014" name="J. Mol. Cell. Cardiol.">
        <title>The C-terminus of the long AKAP13 isoform (AKAP-Lbc) is critical for development of compensatory cardiac hypertrophy.</title>
        <authorList>
            <person name="Taglieri D.M."/>
            <person name="Johnson K.R."/>
            <person name="Burmeister B.T."/>
            <person name="Monasky M.M."/>
            <person name="Spindler M.J."/>
            <person name="DeSantiago J."/>
            <person name="Banach K."/>
            <person name="Conklin B.R."/>
            <person name="Carnegie G.K."/>
        </authorList>
    </citation>
    <scope>FUNCTION IN HEART HYPERTROPHY</scope>
    <scope>INTERACTION WITH AKAP13</scope>
</reference>
<reference key="14">
    <citation type="journal article" date="2016" name="Cell Rep.">
        <title>An evolutionarily conserved PLC-PKD-TFEB pathway for host defense.</title>
        <authorList>
            <person name="Najibi M."/>
            <person name="Labed S.A."/>
            <person name="Visvikis O."/>
            <person name="Irazoqui J.E."/>
        </authorList>
    </citation>
    <scope>FUNCTION</scope>
    <scope>PHOSPHORYLATION AT SER-916</scope>
</reference>
<reference key="15">
    <citation type="journal article" date="2017" name="J. Exp. Med.">
        <title>Protein kinase D at the Golgi controls NLRP3 inflammasome activation.</title>
        <authorList>
            <person name="Zhang Z."/>
            <person name="Meszaros G."/>
            <person name="He W.T."/>
            <person name="Xu Y."/>
            <person name="de Fatima Magliarelli H."/>
            <person name="Mailly L."/>
            <person name="Mihlan M."/>
            <person name="Liu Y."/>
            <person name="Puig Gamez M."/>
            <person name="Goginashvili A."/>
            <person name="Pasquier A."/>
            <person name="Bielska O."/>
            <person name="Neven B."/>
            <person name="Quartier P."/>
            <person name="Aebersold R."/>
            <person name="Baumert T.F."/>
            <person name="Georgel P."/>
            <person name="Han J."/>
            <person name="Ricci R."/>
        </authorList>
    </citation>
    <scope>FUNCTION</scope>
    <scope>CATALYTIC ACTIVITY</scope>
</reference>